<dbReference type="EMBL" id="AK007829">
    <property type="protein sequence ID" value="BAB25289.1"/>
    <property type="molecule type" value="mRNA"/>
</dbReference>
<dbReference type="EMBL" id="AK076035">
    <property type="protein sequence ID" value="BAC36136.1"/>
    <property type="status" value="ALT_INIT"/>
    <property type="molecule type" value="mRNA"/>
</dbReference>
<dbReference type="EMBL" id="AK136802">
    <property type="protein sequence ID" value="BAE23134.1"/>
    <property type="status" value="ALT_INIT"/>
    <property type="molecule type" value="mRNA"/>
</dbReference>
<dbReference type="EMBL" id="AK160852">
    <property type="protein sequence ID" value="BAE36046.1"/>
    <property type="status" value="ALT_INIT"/>
    <property type="molecule type" value="mRNA"/>
</dbReference>
<dbReference type="EMBL" id="BC019573">
    <property type="protein sequence ID" value="AAH19573.1"/>
    <property type="molecule type" value="mRNA"/>
</dbReference>
<dbReference type="EMBL" id="BC050256">
    <property type="status" value="NOT_ANNOTATED_CDS"/>
    <property type="molecule type" value="mRNA"/>
</dbReference>
<dbReference type="RefSeq" id="NP_080603.2">
    <property type="nucleotide sequence ID" value="NM_026327.3"/>
</dbReference>
<dbReference type="FunCoup" id="Q3UVY5">
    <property type="interactions" value="67"/>
</dbReference>
<dbReference type="GlyCosmos" id="Q3UVY5">
    <property type="glycosylation" value="3 sites, No reported glycans"/>
</dbReference>
<dbReference type="GlyGen" id="Q3UVY5">
    <property type="glycosylation" value="3 sites"/>
</dbReference>
<dbReference type="PhosphoSitePlus" id="Q3UVY5"/>
<dbReference type="PaxDb" id="10090-ENSMUSP00000038916"/>
<dbReference type="ProteomicsDB" id="288010">
    <molecule id="Q3UVY5-1"/>
</dbReference>
<dbReference type="ProteomicsDB" id="288011">
    <molecule id="Q3UVY5-2"/>
</dbReference>
<dbReference type="GeneID" id="67708"/>
<dbReference type="KEGG" id="mmu:67708"/>
<dbReference type="UCSC" id="uc007nvq.1">
    <molecule id="Q3UVY5-2"/>
    <property type="organism name" value="mouse"/>
</dbReference>
<dbReference type="AGR" id="MGI:1914958"/>
<dbReference type="CTD" id="64430"/>
<dbReference type="MGI" id="MGI:1914958">
    <property type="gene designation" value="Pcnx4"/>
</dbReference>
<dbReference type="eggNOG" id="KOG3604">
    <property type="taxonomic scope" value="Eukaryota"/>
</dbReference>
<dbReference type="InParanoid" id="Q3UVY5"/>
<dbReference type="OrthoDB" id="5979286at2759"/>
<dbReference type="PhylomeDB" id="Q3UVY5"/>
<dbReference type="BioGRID-ORCS" id="67708">
    <property type="hits" value="3 hits in 76 CRISPR screens"/>
</dbReference>
<dbReference type="ChiTaRS" id="Pcnx4">
    <property type="organism name" value="mouse"/>
</dbReference>
<dbReference type="PRO" id="PR:Q3UVY5"/>
<dbReference type="Proteomes" id="UP000000589">
    <property type="component" value="Unplaced"/>
</dbReference>
<dbReference type="RNAct" id="Q3UVY5">
    <property type="molecule type" value="protein"/>
</dbReference>
<dbReference type="GO" id="GO:0016020">
    <property type="term" value="C:membrane"/>
    <property type="evidence" value="ECO:0007669"/>
    <property type="project" value="UniProtKB-SubCell"/>
</dbReference>
<dbReference type="InterPro" id="IPR039797">
    <property type="entry name" value="Pecanex"/>
</dbReference>
<dbReference type="InterPro" id="IPR007735">
    <property type="entry name" value="Pecanex_C"/>
</dbReference>
<dbReference type="PANTHER" id="PTHR12372">
    <property type="entry name" value="PECANEX"/>
    <property type="match status" value="1"/>
</dbReference>
<dbReference type="PANTHER" id="PTHR12372:SF6">
    <property type="entry name" value="PECANEX-LIKE PROTEIN 4"/>
    <property type="match status" value="1"/>
</dbReference>
<dbReference type="Pfam" id="PF05041">
    <property type="entry name" value="Pecanex_C"/>
    <property type="match status" value="1"/>
</dbReference>
<gene>
    <name evidence="6" type="primary">Pcnx4</name>
    <name type="synonym">Pcnxl4</name>
</gene>
<protein>
    <recommendedName>
        <fullName>Pecanex-like protein 4</fullName>
    </recommendedName>
    <alternativeName>
        <fullName evidence="6">Pecanex homolog protein 4</fullName>
    </alternativeName>
</protein>
<accession>Q3UVY5</accession>
<accession>Q3TUC5</accession>
<accession>Q8BPG1</accession>
<accession>Q8VE84</accession>
<accession>Q9D8P3</accession>
<comment type="subcellular location">
    <subcellularLocation>
        <location evidence="5">Membrane</location>
        <topology evidence="5">Multi-pass membrane protein</topology>
    </subcellularLocation>
</comment>
<comment type="alternative products">
    <event type="alternative splicing"/>
    <isoform>
        <id>Q3UVY5-1</id>
        <name>1</name>
        <sequence type="displayed"/>
    </isoform>
    <isoform>
        <id>Q3UVY5-2</id>
        <name>2</name>
        <sequence type="described" ref="VSP_034161"/>
    </isoform>
</comment>
<comment type="similarity">
    <text evidence="5">Belongs to the pecanex family.</text>
</comment>
<comment type="sequence caution" evidence="5">
    <conflict type="erroneous initiation">
        <sequence resource="EMBL-CDS" id="BAC36136"/>
    </conflict>
    <text>Extended N-terminus.</text>
</comment>
<comment type="sequence caution" evidence="5">
    <conflict type="erroneous initiation">
        <sequence resource="EMBL-CDS" id="BAE23134"/>
    </conflict>
    <text>Extended N-terminus.</text>
</comment>
<comment type="sequence caution" evidence="5">
    <conflict type="erroneous initiation">
        <sequence resource="EMBL-CDS" id="BAE36046"/>
    </conflict>
    <text>Truncated N-terminus.</text>
</comment>
<evidence type="ECO:0000255" key="1"/>
<evidence type="ECO:0000256" key="2">
    <source>
        <dbReference type="SAM" id="MobiDB-lite"/>
    </source>
</evidence>
<evidence type="ECO:0000303" key="3">
    <source>
    </source>
</evidence>
<evidence type="ECO:0000303" key="4">
    <source>
    </source>
</evidence>
<evidence type="ECO:0000305" key="5"/>
<evidence type="ECO:0000312" key="6">
    <source>
        <dbReference type="MGI" id="MGI:1914958"/>
    </source>
</evidence>
<reference key="1">
    <citation type="journal article" date="2005" name="Science">
        <title>The transcriptional landscape of the mammalian genome.</title>
        <authorList>
            <person name="Carninci P."/>
            <person name="Kasukawa T."/>
            <person name="Katayama S."/>
            <person name="Gough J."/>
            <person name="Frith M.C."/>
            <person name="Maeda N."/>
            <person name="Oyama R."/>
            <person name="Ravasi T."/>
            <person name="Lenhard B."/>
            <person name="Wells C."/>
            <person name="Kodzius R."/>
            <person name="Shimokawa K."/>
            <person name="Bajic V.B."/>
            <person name="Brenner S.E."/>
            <person name="Batalov S."/>
            <person name="Forrest A.R."/>
            <person name="Zavolan M."/>
            <person name="Davis M.J."/>
            <person name="Wilming L.G."/>
            <person name="Aidinis V."/>
            <person name="Allen J.E."/>
            <person name="Ambesi-Impiombato A."/>
            <person name="Apweiler R."/>
            <person name="Aturaliya R.N."/>
            <person name="Bailey T.L."/>
            <person name="Bansal M."/>
            <person name="Baxter L."/>
            <person name="Beisel K.W."/>
            <person name="Bersano T."/>
            <person name="Bono H."/>
            <person name="Chalk A.M."/>
            <person name="Chiu K.P."/>
            <person name="Choudhary V."/>
            <person name="Christoffels A."/>
            <person name="Clutterbuck D.R."/>
            <person name="Crowe M.L."/>
            <person name="Dalla E."/>
            <person name="Dalrymple B.P."/>
            <person name="de Bono B."/>
            <person name="Della Gatta G."/>
            <person name="di Bernardo D."/>
            <person name="Down T."/>
            <person name="Engstrom P."/>
            <person name="Fagiolini M."/>
            <person name="Faulkner G."/>
            <person name="Fletcher C.F."/>
            <person name="Fukushima T."/>
            <person name="Furuno M."/>
            <person name="Futaki S."/>
            <person name="Gariboldi M."/>
            <person name="Georgii-Hemming P."/>
            <person name="Gingeras T.R."/>
            <person name="Gojobori T."/>
            <person name="Green R.E."/>
            <person name="Gustincich S."/>
            <person name="Harbers M."/>
            <person name="Hayashi Y."/>
            <person name="Hensch T.K."/>
            <person name="Hirokawa N."/>
            <person name="Hill D."/>
            <person name="Huminiecki L."/>
            <person name="Iacono M."/>
            <person name="Ikeo K."/>
            <person name="Iwama A."/>
            <person name="Ishikawa T."/>
            <person name="Jakt M."/>
            <person name="Kanapin A."/>
            <person name="Katoh M."/>
            <person name="Kawasawa Y."/>
            <person name="Kelso J."/>
            <person name="Kitamura H."/>
            <person name="Kitano H."/>
            <person name="Kollias G."/>
            <person name="Krishnan S.P."/>
            <person name="Kruger A."/>
            <person name="Kummerfeld S.K."/>
            <person name="Kurochkin I.V."/>
            <person name="Lareau L.F."/>
            <person name="Lazarevic D."/>
            <person name="Lipovich L."/>
            <person name="Liu J."/>
            <person name="Liuni S."/>
            <person name="McWilliam S."/>
            <person name="Madan Babu M."/>
            <person name="Madera M."/>
            <person name="Marchionni L."/>
            <person name="Matsuda H."/>
            <person name="Matsuzawa S."/>
            <person name="Miki H."/>
            <person name="Mignone F."/>
            <person name="Miyake S."/>
            <person name="Morris K."/>
            <person name="Mottagui-Tabar S."/>
            <person name="Mulder N."/>
            <person name="Nakano N."/>
            <person name="Nakauchi H."/>
            <person name="Ng P."/>
            <person name="Nilsson R."/>
            <person name="Nishiguchi S."/>
            <person name="Nishikawa S."/>
            <person name="Nori F."/>
            <person name="Ohara O."/>
            <person name="Okazaki Y."/>
            <person name="Orlando V."/>
            <person name="Pang K.C."/>
            <person name="Pavan W.J."/>
            <person name="Pavesi G."/>
            <person name="Pesole G."/>
            <person name="Petrovsky N."/>
            <person name="Piazza S."/>
            <person name="Reed J."/>
            <person name="Reid J.F."/>
            <person name="Ring B.Z."/>
            <person name="Ringwald M."/>
            <person name="Rost B."/>
            <person name="Ruan Y."/>
            <person name="Salzberg S.L."/>
            <person name="Sandelin A."/>
            <person name="Schneider C."/>
            <person name="Schoenbach C."/>
            <person name="Sekiguchi K."/>
            <person name="Semple C.A."/>
            <person name="Seno S."/>
            <person name="Sessa L."/>
            <person name="Sheng Y."/>
            <person name="Shibata Y."/>
            <person name="Shimada H."/>
            <person name="Shimada K."/>
            <person name="Silva D."/>
            <person name="Sinclair B."/>
            <person name="Sperling S."/>
            <person name="Stupka E."/>
            <person name="Sugiura K."/>
            <person name="Sultana R."/>
            <person name="Takenaka Y."/>
            <person name="Taki K."/>
            <person name="Tammoja K."/>
            <person name="Tan S.L."/>
            <person name="Tang S."/>
            <person name="Taylor M.S."/>
            <person name="Tegner J."/>
            <person name="Teichmann S.A."/>
            <person name="Ueda H.R."/>
            <person name="van Nimwegen E."/>
            <person name="Verardo R."/>
            <person name="Wei C.L."/>
            <person name="Yagi K."/>
            <person name="Yamanishi H."/>
            <person name="Zabarovsky E."/>
            <person name="Zhu S."/>
            <person name="Zimmer A."/>
            <person name="Hide W."/>
            <person name="Bult C."/>
            <person name="Grimmond S.M."/>
            <person name="Teasdale R.D."/>
            <person name="Liu E.T."/>
            <person name="Brusic V."/>
            <person name="Quackenbush J."/>
            <person name="Wahlestedt C."/>
            <person name="Mattick J.S."/>
            <person name="Hume D.A."/>
            <person name="Kai C."/>
            <person name="Sasaki D."/>
            <person name="Tomaru Y."/>
            <person name="Fukuda S."/>
            <person name="Kanamori-Katayama M."/>
            <person name="Suzuki M."/>
            <person name="Aoki J."/>
            <person name="Arakawa T."/>
            <person name="Iida J."/>
            <person name="Imamura K."/>
            <person name="Itoh M."/>
            <person name="Kato T."/>
            <person name="Kawaji H."/>
            <person name="Kawagashira N."/>
            <person name="Kawashima T."/>
            <person name="Kojima M."/>
            <person name="Kondo S."/>
            <person name="Konno H."/>
            <person name="Nakano K."/>
            <person name="Ninomiya N."/>
            <person name="Nishio T."/>
            <person name="Okada M."/>
            <person name="Plessy C."/>
            <person name="Shibata K."/>
            <person name="Shiraki T."/>
            <person name="Suzuki S."/>
            <person name="Tagami M."/>
            <person name="Waki K."/>
            <person name="Watahiki A."/>
            <person name="Okamura-Oho Y."/>
            <person name="Suzuki H."/>
            <person name="Kawai J."/>
            <person name="Hayashizaki Y."/>
        </authorList>
    </citation>
    <scope>NUCLEOTIDE SEQUENCE [LARGE SCALE MRNA] (ISOFORMS 1 AND 2)</scope>
    <source>
        <strain>C57BL/6J</strain>
        <tissue>Brain</tissue>
        <tissue>Diencephalon</tissue>
        <tissue>Pancreas</tissue>
    </source>
</reference>
<reference key="2">
    <citation type="journal article" date="2004" name="Genome Res.">
        <title>The status, quality, and expansion of the NIH full-length cDNA project: the Mammalian Gene Collection (MGC).</title>
        <authorList>
            <consortium name="The MGC Project Team"/>
        </authorList>
    </citation>
    <scope>NUCLEOTIDE SEQUENCE [LARGE SCALE MRNA] (ISOFORM 2)</scope>
    <scope>NUCLEOTIDE SEQUENCE [LARGE SCALE MRNA] OF 688-1174 (ISOFORM 1)</scope>
    <source>
        <strain>Czech II</strain>
        <tissue>Eye</tissue>
        <tissue>Mammary tumor</tissue>
    </source>
</reference>
<keyword id="KW-0025">Alternative splicing</keyword>
<keyword id="KW-0325">Glycoprotein</keyword>
<keyword id="KW-0472">Membrane</keyword>
<keyword id="KW-1185">Reference proteome</keyword>
<keyword id="KW-0812">Transmembrane</keyword>
<keyword id="KW-1133">Transmembrane helix</keyword>
<proteinExistence type="evidence at transcript level"/>
<sequence length="1174" mass="131243">MSSDVPLLNDYKQDFLLKRFPQTVLGGPRLKLGYCAPPYIYVNQIVLFLMPWALGGTGTLLYQLDILRDYTAAALSGGLMVFTAAVIQLISVYARSKPVVVRRMRTRDILAEEDQHEFTSCAGAETVKFLIPGKKYVANTVFHSVLAGLVCGLGTWYLLPNRVTLLYGSPGATAVLFVFGWITLCIGEYSLIVNTATETATFQTQDTYEITPLMRPLYIFFFVSVDLAHRFIVNIPALEQMNQILHILFVLLPFLWALGTLPPPDALLFWAVEQVLEFGLGGSSMSTHLRLLVMFIVSAGAAVVSYFIPSTVGVVLFMTGLGFLLSLNPSDVSMVFRYGVTRHRVGSSHEARPGNSGHWFPWKECFLFIAVLGMALLEAGLLHHYVSVPQVSRSGAQAVVGYVLMVLLSIVWILRETQSIYIFGIFRNPFYPKDIHAVSVFYDKQNKLLKIGAVRWILLTLVSPLAMVAFLALDSSLHGLHSVSVSIGFTRAFRMVWQNTETALLETVVVSAVHMVSSTDCWWNRSLDTGIRLLLIGIMRDRLIQFITKLQFAVTVLLALWTEKKQHRKTTTTLCVLNTVFAPFVLGIIVLSTLLSSPLLPLFTLPVFLVGFPRPVQSWPGAVGTAACVCTDSVFYHQMVPRLTAALQTAMAAGSLGLLLPGSHYLGRFEDRLIWIMILECGYTYCCINVKGLELQETSCHTAEAQRVDEVFESAFQREHPQVCSLNEHLENVLTPCTVLPVKLYSDARNVLTGIIDSPDNLKEFKDDLIKVLVWVLIQHCSKRPSTQENKTENTGEASPALPPAANSSPCPESLEDSESANSDWSDGSIFDDEPAIKNRKEKLQSKDLPCTKLPIPGSVDSQNPDDHSAGTGPKNDLYRTVILGLPAVDKGQREDVAYIPLVEFSCSQSRLLSLPEEWRSNSTPRSKILEMSALFPEDWYQFVLRQLECFHSEEKSRVLEEIAKDKALKDLYVHTVMACYIGLFGIDNGVPSPGQLVRVYNGGLPWAGTLDWLSEKPELFHLVRKAFRYTLKLMVDKASLGPIEDFKELTNCLREYERDWYIGLVSEEQWKRAILEEKPCLFCLGYESSMGVYTSRVLMLQEMSVHIGKLNAEAVRGQWANLSWELLYATNDDEERYSIQAHPLLLRNLTVQAADPPLGYPIFSSKPLPIHLC</sequence>
<organism>
    <name type="scientific">Mus musculus</name>
    <name type="common">Mouse</name>
    <dbReference type="NCBI Taxonomy" id="10090"/>
    <lineage>
        <taxon>Eukaryota</taxon>
        <taxon>Metazoa</taxon>
        <taxon>Chordata</taxon>
        <taxon>Craniata</taxon>
        <taxon>Vertebrata</taxon>
        <taxon>Euteleostomi</taxon>
        <taxon>Mammalia</taxon>
        <taxon>Eutheria</taxon>
        <taxon>Euarchontoglires</taxon>
        <taxon>Glires</taxon>
        <taxon>Rodentia</taxon>
        <taxon>Myomorpha</taxon>
        <taxon>Muroidea</taxon>
        <taxon>Muridae</taxon>
        <taxon>Murinae</taxon>
        <taxon>Mus</taxon>
        <taxon>Mus</taxon>
    </lineage>
</organism>
<name>PCX4_MOUSE</name>
<feature type="chain" id="PRO_0000339367" description="Pecanex-like protein 4">
    <location>
        <begin position="1"/>
        <end position="1174"/>
    </location>
</feature>
<feature type="transmembrane region" description="Helical" evidence="1">
    <location>
        <begin position="40"/>
        <end position="60"/>
    </location>
</feature>
<feature type="transmembrane region" description="Helical" evidence="1">
    <location>
        <begin position="72"/>
        <end position="92"/>
    </location>
</feature>
<feature type="transmembrane region" description="Helical" evidence="1">
    <location>
        <begin position="140"/>
        <end position="160"/>
    </location>
</feature>
<feature type="transmembrane region" description="Helical" evidence="1">
    <location>
        <begin position="173"/>
        <end position="193"/>
    </location>
</feature>
<feature type="transmembrane region" description="Helical" evidence="1">
    <location>
        <begin position="217"/>
        <end position="237"/>
    </location>
</feature>
<feature type="transmembrane region" description="Helical" evidence="1">
    <location>
        <begin position="244"/>
        <end position="264"/>
    </location>
</feature>
<feature type="transmembrane region" description="Helical" evidence="1">
    <location>
        <begin position="284"/>
        <end position="304"/>
    </location>
</feature>
<feature type="transmembrane region" description="Helical" evidence="1">
    <location>
        <begin position="307"/>
        <end position="327"/>
    </location>
</feature>
<feature type="transmembrane region" description="Helical" evidence="1">
    <location>
        <begin position="366"/>
        <end position="386"/>
    </location>
</feature>
<feature type="transmembrane region" description="Helical" evidence="1">
    <location>
        <begin position="394"/>
        <end position="414"/>
    </location>
</feature>
<feature type="transmembrane region" description="Helical" evidence="1">
    <location>
        <begin position="451"/>
        <end position="471"/>
    </location>
</feature>
<feature type="transmembrane region" description="Helical" evidence="1">
    <location>
        <begin position="543"/>
        <end position="563"/>
    </location>
</feature>
<feature type="transmembrane region" description="Helical" evidence="1">
    <location>
        <begin position="580"/>
        <end position="600"/>
    </location>
</feature>
<feature type="transmembrane region" description="Helical" evidence="1">
    <location>
        <begin position="643"/>
        <end position="663"/>
    </location>
</feature>
<feature type="region of interest" description="Disordered" evidence="2">
    <location>
        <begin position="785"/>
        <end position="875"/>
    </location>
</feature>
<feature type="compositionally biased region" description="Polar residues" evidence="2">
    <location>
        <begin position="785"/>
        <end position="797"/>
    </location>
</feature>
<feature type="compositionally biased region" description="Low complexity" evidence="2">
    <location>
        <begin position="798"/>
        <end position="810"/>
    </location>
</feature>
<feature type="compositionally biased region" description="Basic and acidic residues" evidence="2">
    <location>
        <begin position="835"/>
        <end position="846"/>
    </location>
</feature>
<feature type="glycosylation site" description="N-linked (GlcNAc...) asparagine" evidence="1">
    <location>
        <position position="790"/>
    </location>
</feature>
<feature type="glycosylation site" description="N-linked (GlcNAc...) asparagine" evidence="1">
    <location>
        <position position="1122"/>
    </location>
</feature>
<feature type="glycosylation site" description="N-linked (GlcNAc...) asparagine" evidence="1">
    <location>
        <position position="1149"/>
    </location>
</feature>
<feature type="splice variant" id="VSP_034161" description="In isoform 2." evidence="3 4">
    <location>
        <begin position="231"/>
        <end position="1174"/>
    </location>
</feature>
<feature type="sequence conflict" description="In Ref. 1; BAC36136/BAB25289 and 2; BC050256." evidence="5" ref="1 2">
    <original>P</original>
    <variation>S</variation>
    <location>
        <position position="98"/>
    </location>
</feature>
<feature type="sequence conflict" description="In Ref. 2; AAH19573." evidence="5" ref="2">
    <original>A</original>
    <variation>G</variation>
    <location>
        <position position="798"/>
    </location>
</feature>
<feature type="sequence conflict" description="In Ref. 2; AAH19573." evidence="5" ref="2">
    <original>V</original>
    <variation>I</variation>
    <location>
        <position position="860"/>
    </location>
</feature>
<feature type="sequence conflict" description="In Ref. 2; AAH19573." evidence="5" ref="2">
    <original>R</original>
    <variation>H</variation>
    <location>
        <position position="958"/>
    </location>
</feature>